<feature type="transit peptide" description="Chloroplast" evidence="1">
    <location>
        <begin position="1"/>
        <end position="49"/>
    </location>
</feature>
<feature type="chain" id="PRO_0000031494" description="Ribulose bisphosphate carboxylase small subunit, chloroplastic 3" evidence="1">
    <location>
        <begin position="50"/>
        <end position="173"/>
    </location>
</feature>
<accession>Q39745</accession>
<proteinExistence type="evidence at transcript level"/>
<dbReference type="EMBL" id="U29935">
    <property type="protein sequence ID" value="AAB67847.1"/>
    <property type="molecule type" value="mRNA"/>
</dbReference>
<dbReference type="SMR" id="Q39745"/>
<dbReference type="GO" id="GO:0009507">
    <property type="term" value="C:chloroplast"/>
    <property type="evidence" value="ECO:0007669"/>
    <property type="project" value="UniProtKB-SubCell"/>
</dbReference>
<dbReference type="GO" id="GO:0016984">
    <property type="term" value="F:ribulose-bisphosphate carboxylase activity"/>
    <property type="evidence" value="ECO:0007669"/>
    <property type="project" value="UniProtKB-UniRule"/>
</dbReference>
<dbReference type="GO" id="GO:0009853">
    <property type="term" value="P:photorespiration"/>
    <property type="evidence" value="ECO:0007669"/>
    <property type="project" value="UniProtKB-KW"/>
</dbReference>
<dbReference type="GO" id="GO:0019253">
    <property type="term" value="P:reductive pentose-phosphate cycle"/>
    <property type="evidence" value="ECO:0007669"/>
    <property type="project" value="UniProtKB-UniRule"/>
</dbReference>
<dbReference type="CDD" id="cd03527">
    <property type="entry name" value="RuBisCO_small"/>
    <property type="match status" value="1"/>
</dbReference>
<dbReference type="FunFam" id="3.30.190.10:FF:000001">
    <property type="entry name" value="Ribulose bisphosphate carboxylase small chain, chloroplastic"/>
    <property type="match status" value="1"/>
</dbReference>
<dbReference type="Gene3D" id="3.30.190.10">
    <property type="entry name" value="Ribulose bisphosphate carboxylase, small subunit"/>
    <property type="match status" value="1"/>
</dbReference>
<dbReference type="HAMAP" id="MF_00859">
    <property type="entry name" value="RuBisCO_S_bact"/>
    <property type="match status" value="1"/>
</dbReference>
<dbReference type="InterPro" id="IPR024681">
    <property type="entry name" value="RuBisCO_ssu"/>
</dbReference>
<dbReference type="InterPro" id="IPR000894">
    <property type="entry name" value="RuBisCO_ssu_dom"/>
</dbReference>
<dbReference type="InterPro" id="IPR024680">
    <property type="entry name" value="RuBisCO_ssu_N"/>
</dbReference>
<dbReference type="InterPro" id="IPR036385">
    <property type="entry name" value="RuBisCO_ssu_sf"/>
</dbReference>
<dbReference type="PANTHER" id="PTHR31262">
    <property type="entry name" value="RIBULOSE BISPHOSPHATE CARBOXYLASE SMALL CHAIN 1, CHLOROPLASTIC"/>
    <property type="match status" value="1"/>
</dbReference>
<dbReference type="PANTHER" id="PTHR31262:SF10">
    <property type="entry name" value="RIBULOSE BISPHOSPHATE CARBOXYLASE SMALL SUBUNIT 1A, CHLOROPLASTIC-RELATED"/>
    <property type="match status" value="1"/>
</dbReference>
<dbReference type="Pfam" id="PF12338">
    <property type="entry name" value="RbcS"/>
    <property type="match status" value="1"/>
</dbReference>
<dbReference type="Pfam" id="PF00101">
    <property type="entry name" value="RuBisCO_small"/>
    <property type="match status" value="1"/>
</dbReference>
<dbReference type="PRINTS" id="PR00152">
    <property type="entry name" value="RUBISCOSMALL"/>
</dbReference>
<dbReference type="SMART" id="SM00961">
    <property type="entry name" value="RuBisCO_small"/>
    <property type="match status" value="1"/>
</dbReference>
<dbReference type="SUPFAM" id="SSF55239">
    <property type="entry name" value="RuBisCO, small subunit"/>
    <property type="match status" value="1"/>
</dbReference>
<protein>
    <recommendedName>
        <fullName evidence="1">Ribulose bisphosphate carboxylase small subunit, chloroplastic 3</fullName>
        <shortName evidence="1">RuBisCO small subunit 3</shortName>
    </recommendedName>
</protein>
<evidence type="ECO:0000255" key="1">
    <source>
        <dbReference type="HAMAP-Rule" id="MF_00860"/>
    </source>
</evidence>
<gene>
    <name evidence="1" type="primary">RBCS3</name>
</gene>
<reference key="1">
    <citation type="online journal article" date="1996" name="Plant Gene Register">
        <title>Sequences of seven cDNAs encoding the Rubisco small subunit from Flaveria pringlei.</title>
        <authorList>
            <person name="McGonigle B."/>
            <person name="Lai L.B."/>
            <person name="Nelson T."/>
        </authorList>
        <locator>PGR96-057</locator>
    </citation>
    <scope>NUCLEOTIDE SEQUENCE [MRNA]</scope>
    <source>
        <tissue>Leaf</tissue>
    </source>
</reference>
<keyword id="KW-0113">Calvin cycle</keyword>
<keyword id="KW-0120">Carbon dioxide fixation</keyword>
<keyword id="KW-0150">Chloroplast</keyword>
<keyword id="KW-0601">Photorespiration</keyword>
<keyword id="KW-0602">Photosynthesis</keyword>
<keyword id="KW-0934">Plastid</keyword>
<keyword id="KW-0809">Transit peptide</keyword>
<comment type="function">
    <text evidence="1">RuBisCO catalyzes two reactions: the carboxylation of D-ribulose 1,5-bisphosphate, the primary event in carbon dioxide fixation, as well as the oxidative fragmentation of the pentose substrate. Both reactions occur simultaneously and in competition at the same active site. Although the small subunit is not catalytic it is essential for maximal activity.</text>
</comment>
<comment type="subunit">
    <text evidence="1">Heterohexadecamer of 8 large and 8 small subunits.</text>
</comment>
<comment type="subcellular location">
    <subcellularLocation>
        <location evidence="1">Plastid</location>
        <location evidence="1">Chloroplast</location>
    </subcellularLocation>
</comment>
<comment type="miscellaneous">
    <text evidence="1">The basic functional RuBisCO is composed of a large chain homodimer in a 'head-to-tail' conformation. In form I RuBisCO this homodimer is arranged in a barrel-like tetramer with the small subunits forming a tetrameric 'cap' on each end of the 'barrel'.</text>
</comment>
<comment type="similarity">
    <text evidence="1">Belongs to the RuBisCO small chain family.</text>
</comment>
<organism>
    <name type="scientific">Flaveria pringlei</name>
    <dbReference type="NCBI Taxonomy" id="4226"/>
    <lineage>
        <taxon>Eukaryota</taxon>
        <taxon>Viridiplantae</taxon>
        <taxon>Streptophyta</taxon>
        <taxon>Embryophyta</taxon>
        <taxon>Tracheophyta</taxon>
        <taxon>Spermatophyta</taxon>
        <taxon>Magnoliopsida</taxon>
        <taxon>eudicotyledons</taxon>
        <taxon>Gunneridae</taxon>
        <taxon>Pentapetalae</taxon>
        <taxon>asterids</taxon>
        <taxon>campanulids</taxon>
        <taxon>Asterales</taxon>
        <taxon>Asteraceae</taxon>
        <taxon>Asteroideae</taxon>
        <taxon>Heliantheae alliance</taxon>
        <taxon>Tageteae</taxon>
        <taxon>Flaveria</taxon>
    </lineage>
</organism>
<sequence>MASIPATVATVAQANMVAPFTGLKSNAAFPVTKKVNDFSTLPSNGGRVQCMKVWPPLGKKRYETLSYLPNLTESQLAKEVDYLLRNKWVPCLEFELEHGFVYRENARSPGYYDGRYWTMWKLPMFGCTDSAQVMKELQECKKEYPQAWIRIIGFDNVRQVQCISFIASKPDGF</sequence>
<name>RBS3_FLAPR</name>